<dbReference type="EMBL" id="AE005673">
    <property type="protein sequence ID" value="AAK24316.1"/>
    <property type="molecule type" value="Genomic_DNA"/>
</dbReference>
<dbReference type="PIR" id="H87539">
    <property type="entry name" value="H87539"/>
</dbReference>
<dbReference type="RefSeq" id="NP_421148.1">
    <property type="nucleotide sequence ID" value="NC_002696.2"/>
</dbReference>
<dbReference type="RefSeq" id="WP_010920203.1">
    <property type="nucleotide sequence ID" value="NC_002696.2"/>
</dbReference>
<dbReference type="STRING" id="190650.CC_2345"/>
<dbReference type="EnsemblBacteria" id="AAK24316">
    <property type="protein sequence ID" value="AAK24316"/>
    <property type="gene ID" value="CC_2345"/>
</dbReference>
<dbReference type="KEGG" id="ccr:CC_2345"/>
<dbReference type="PATRIC" id="fig|190650.5.peg.2366"/>
<dbReference type="eggNOG" id="COG5328">
    <property type="taxonomic scope" value="Bacteria"/>
</dbReference>
<dbReference type="HOGENOM" id="CLU_112904_0_0_5"/>
<dbReference type="BioCyc" id="CAULO:CC2345-MONOMER"/>
<dbReference type="Proteomes" id="UP000001816">
    <property type="component" value="Chromosome"/>
</dbReference>
<dbReference type="HAMAP" id="MF_00678">
    <property type="entry name" value="UPF0262"/>
    <property type="match status" value="1"/>
</dbReference>
<dbReference type="InterPro" id="IPR008321">
    <property type="entry name" value="UCP032146"/>
</dbReference>
<dbReference type="NCBIfam" id="NF002769">
    <property type="entry name" value="PRK02853.1"/>
    <property type="match status" value="1"/>
</dbReference>
<dbReference type="Pfam" id="PF06793">
    <property type="entry name" value="UPF0262"/>
    <property type="match status" value="1"/>
</dbReference>
<dbReference type="PIRSF" id="PIRSF032146">
    <property type="entry name" value="UCP032146"/>
    <property type="match status" value="1"/>
</dbReference>
<protein>
    <recommendedName>
        <fullName evidence="1">UPF0262 protein CC_2345</fullName>
    </recommendedName>
</protein>
<name>Y2345_CAUVC</name>
<proteinExistence type="inferred from homology"/>
<accession>Q9A5V2</accession>
<reference key="1">
    <citation type="journal article" date="2001" name="Proc. Natl. Acad. Sci. U.S.A.">
        <title>Complete genome sequence of Caulobacter crescentus.</title>
        <authorList>
            <person name="Nierman W.C."/>
            <person name="Feldblyum T.V."/>
            <person name="Laub M.T."/>
            <person name="Paulsen I.T."/>
            <person name="Nelson K.E."/>
            <person name="Eisen J.A."/>
            <person name="Heidelberg J.F."/>
            <person name="Alley M.R.K."/>
            <person name="Ohta N."/>
            <person name="Maddock J.R."/>
            <person name="Potocka I."/>
            <person name="Nelson W.C."/>
            <person name="Newton A."/>
            <person name="Stephens C."/>
            <person name="Phadke N.D."/>
            <person name="Ely B."/>
            <person name="DeBoy R.T."/>
            <person name="Dodson R.J."/>
            <person name="Durkin A.S."/>
            <person name="Gwinn M.L."/>
            <person name="Haft D.H."/>
            <person name="Kolonay J.F."/>
            <person name="Smit J."/>
            <person name="Craven M.B."/>
            <person name="Khouri H.M."/>
            <person name="Shetty J."/>
            <person name="Berry K.J."/>
            <person name="Utterback T.R."/>
            <person name="Tran K."/>
            <person name="Wolf A.M."/>
            <person name="Vamathevan J.J."/>
            <person name="Ermolaeva M.D."/>
            <person name="White O."/>
            <person name="Salzberg S.L."/>
            <person name="Venter J.C."/>
            <person name="Shapiro L."/>
            <person name="Fraser C.M."/>
        </authorList>
    </citation>
    <scope>NUCLEOTIDE SEQUENCE [LARGE SCALE GENOMIC DNA]</scope>
    <source>
        <strain>ATCC 19089 / CIP 103742 / CB 15</strain>
    </source>
</reference>
<comment type="similarity">
    <text evidence="1">Belongs to the UPF0262 family.</text>
</comment>
<feature type="chain" id="PRO_0000220330" description="UPF0262 protein CC_2345">
    <location>
        <begin position="1"/>
        <end position="159"/>
    </location>
</feature>
<sequence length="159" mass="18034">MSTDARANHRIKSIEIDEESLAAASRDQEQERQVAIFDLLEGNYFEPAEAGDGPYDVRLSLIENRLAFDIASAGHARRHLLSLSPFRGVIKDYFLICDSYYSAIRNSSPQQIEALDMGRRGLHNEGSNLLRERLEGKVKTDLDTARRLFTLICALHWRG</sequence>
<keyword id="KW-1185">Reference proteome</keyword>
<evidence type="ECO:0000255" key="1">
    <source>
        <dbReference type="HAMAP-Rule" id="MF_00678"/>
    </source>
</evidence>
<organism>
    <name type="scientific">Caulobacter vibrioides (strain ATCC 19089 / CIP 103742 / CB 15)</name>
    <name type="common">Caulobacter crescentus</name>
    <dbReference type="NCBI Taxonomy" id="190650"/>
    <lineage>
        <taxon>Bacteria</taxon>
        <taxon>Pseudomonadati</taxon>
        <taxon>Pseudomonadota</taxon>
        <taxon>Alphaproteobacteria</taxon>
        <taxon>Caulobacterales</taxon>
        <taxon>Caulobacteraceae</taxon>
        <taxon>Caulobacter</taxon>
    </lineage>
</organism>
<gene>
    <name type="ordered locus">CC_2345</name>
</gene>